<reference key="1">
    <citation type="journal article" date="2003" name="Proc. Natl. Acad. Sci. U.S.A.">
        <title>The complete genome sequence of the Arabidopsis and tomato pathogen Pseudomonas syringae pv. tomato DC3000.</title>
        <authorList>
            <person name="Buell C.R."/>
            <person name="Joardar V."/>
            <person name="Lindeberg M."/>
            <person name="Selengut J."/>
            <person name="Paulsen I.T."/>
            <person name="Gwinn M.L."/>
            <person name="Dodson R.J."/>
            <person name="DeBoy R.T."/>
            <person name="Durkin A.S."/>
            <person name="Kolonay J.F."/>
            <person name="Madupu R."/>
            <person name="Daugherty S.C."/>
            <person name="Brinkac L.M."/>
            <person name="Beanan M.J."/>
            <person name="Haft D.H."/>
            <person name="Nelson W.C."/>
            <person name="Davidsen T.M."/>
            <person name="Zafar N."/>
            <person name="Zhou L."/>
            <person name="Liu J."/>
            <person name="Yuan Q."/>
            <person name="Khouri H.M."/>
            <person name="Fedorova N.B."/>
            <person name="Tran B."/>
            <person name="Russell D."/>
            <person name="Berry K.J."/>
            <person name="Utterback T.R."/>
            <person name="Van Aken S.E."/>
            <person name="Feldblyum T.V."/>
            <person name="D'Ascenzo M."/>
            <person name="Deng W.-L."/>
            <person name="Ramos A.R."/>
            <person name="Alfano J.R."/>
            <person name="Cartinhour S."/>
            <person name="Chatterjee A.K."/>
            <person name="Delaney T.P."/>
            <person name="Lazarowitz S.G."/>
            <person name="Martin G.B."/>
            <person name="Schneider D.J."/>
            <person name="Tang X."/>
            <person name="Bender C.L."/>
            <person name="White O."/>
            <person name="Fraser C.M."/>
            <person name="Collmer A."/>
        </authorList>
    </citation>
    <scope>NUCLEOTIDE SEQUENCE [LARGE SCALE GENOMIC DNA]</scope>
    <source>
        <strain>ATCC BAA-871 / DC3000</strain>
    </source>
</reference>
<gene>
    <name evidence="1" type="primary">rplJ</name>
    <name type="ordered locus">PSPTO_0617</name>
</gene>
<feature type="chain" id="PRO_0000154692" description="Large ribosomal subunit protein uL10">
    <location>
        <begin position="1"/>
        <end position="166"/>
    </location>
</feature>
<name>RL10_PSESM</name>
<comment type="function">
    <text evidence="1">Forms part of the ribosomal stalk, playing a central role in the interaction of the ribosome with GTP-bound translation factors.</text>
</comment>
<comment type="subunit">
    <text evidence="1">Part of the ribosomal stalk of the 50S ribosomal subunit. The N-terminus interacts with L11 and the large rRNA to form the base of the stalk. The C-terminus forms an elongated spine to which L12 dimers bind in a sequential fashion forming a multimeric L10(L12)X complex.</text>
</comment>
<comment type="similarity">
    <text evidence="1">Belongs to the universal ribosomal protein uL10 family.</text>
</comment>
<protein>
    <recommendedName>
        <fullName evidence="1">Large ribosomal subunit protein uL10</fullName>
    </recommendedName>
    <alternativeName>
        <fullName evidence="2">50S ribosomal protein L10</fullName>
    </alternativeName>
</protein>
<sequence>MAIKLEDKKAIVAEVNEAAKAGLSAVVADARGVTVGAMTGLRKEAREAGVYVRVVRNTLLKRAVADTEFSVLNDVFTGPTLIAFSNEHPGAAARLFKEFAKGQDKFEIKAAAFEGKFLAANQIDVLATLPTRNEAISQLMSVIQGATSKLARTLAAVRDQKEAAAA</sequence>
<accession>Q889Y0</accession>
<organism>
    <name type="scientific">Pseudomonas syringae pv. tomato (strain ATCC BAA-871 / DC3000)</name>
    <dbReference type="NCBI Taxonomy" id="223283"/>
    <lineage>
        <taxon>Bacteria</taxon>
        <taxon>Pseudomonadati</taxon>
        <taxon>Pseudomonadota</taxon>
        <taxon>Gammaproteobacteria</taxon>
        <taxon>Pseudomonadales</taxon>
        <taxon>Pseudomonadaceae</taxon>
        <taxon>Pseudomonas</taxon>
    </lineage>
</organism>
<dbReference type="EMBL" id="AE016853">
    <property type="protein sequence ID" value="AAO54159.1"/>
    <property type="molecule type" value="Genomic_DNA"/>
</dbReference>
<dbReference type="RefSeq" id="NP_790464.1">
    <property type="nucleotide sequence ID" value="NC_004578.1"/>
</dbReference>
<dbReference type="RefSeq" id="WP_004397081.1">
    <property type="nucleotide sequence ID" value="NC_004578.1"/>
</dbReference>
<dbReference type="STRING" id="223283.PSPTO_0617"/>
<dbReference type="GeneID" id="61790285"/>
<dbReference type="KEGG" id="pst:PSPTO_0617"/>
<dbReference type="PATRIC" id="fig|223283.9.peg.623"/>
<dbReference type="eggNOG" id="COG0244">
    <property type="taxonomic scope" value="Bacteria"/>
</dbReference>
<dbReference type="HOGENOM" id="CLU_092227_0_2_6"/>
<dbReference type="OrthoDB" id="9808307at2"/>
<dbReference type="PhylomeDB" id="Q889Y0"/>
<dbReference type="Proteomes" id="UP000002515">
    <property type="component" value="Chromosome"/>
</dbReference>
<dbReference type="GO" id="GO:0015934">
    <property type="term" value="C:large ribosomal subunit"/>
    <property type="evidence" value="ECO:0007669"/>
    <property type="project" value="InterPro"/>
</dbReference>
<dbReference type="GO" id="GO:0070180">
    <property type="term" value="F:large ribosomal subunit rRNA binding"/>
    <property type="evidence" value="ECO:0007669"/>
    <property type="project" value="UniProtKB-UniRule"/>
</dbReference>
<dbReference type="GO" id="GO:0003735">
    <property type="term" value="F:structural constituent of ribosome"/>
    <property type="evidence" value="ECO:0007669"/>
    <property type="project" value="InterPro"/>
</dbReference>
<dbReference type="GO" id="GO:0006412">
    <property type="term" value="P:translation"/>
    <property type="evidence" value="ECO:0007669"/>
    <property type="project" value="UniProtKB-UniRule"/>
</dbReference>
<dbReference type="CDD" id="cd05797">
    <property type="entry name" value="Ribosomal_L10"/>
    <property type="match status" value="1"/>
</dbReference>
<dbReference type="FunFam" id="3.30.70.1730:FF:000001">
    <property type="entry name" value="50S ribosomal protein L10"/>
    <property type="match status" value="1"/>
</dbReference>
<dbReference type="Gene3D" id="3.30.70.1730">
    <property type="match status" value="1"/>
</dbReference>
<dbReference type="Gene3D" id="6.10.250.2350">
    <property type="match status" value="1"/>
</dbReference>
<dbReference type="HAMAP" id="MF_00362">
    <property type="entry name" value="Ribosomal_uL10"/>
    <property type="match status" value="1"/>
</dbReference>
<dbReference type="InterPro" id="IPR001790">
    <property type="entry name" value="Ribosomal_uL10"/>
</dbReference>
<dbReference type="InterPro" id="IPR043141">
    <property type="entry name" value="Ribosomal_uL10-like_sf"/>
</dbReference>
<dbReference type="InterPro" id="IPR022973">
    <property type="entry name" value="Ribosomal_uL10_bac"/>
</dbReference>
<dbReference type="InterPro" id="IPR047865">
    <property type="entry name" value="Ribosomal_uL10_bac_type"/>
</dbReference>
<dbReference type="InterPro" id="IPR002363">
    <property type="entry name" value="Ribosomal_uL10_CS_bac"/>
</dbReference>
<dbReference type="NCBIfam" id="NF000955">
    <property type="entry name" value="PRK00099.1-1"/>
    <property type="match status" value="1"/>
</dbReference>
<dbReference type="PANTHER" id="PTHR11560">
    <property type="entry name" value="39S RIBOSOMAL PROTEIN L10, MITOCHONDRIAL"/>
    <property type="match status" value="1"/>
</dbReference>
<dbReference type="Pfam" id="PF00466">
    <property type="entry name" value="Ribosomal_L10"/>
    <property type="match status" value="1"/>
</dbReference>
<dbReference type="SUPFAM" id="SSF160369">
    <property type="entry name" value="Ribosomal protein L10-like"/>
    <property type="match status" value="1"/>
</dbReference>
<dbReference type="PROSITE" id="PS01109">
    <property type="entry name" value="RIBOSOMAL_L10"/>
    <property type="match status" value="1"/>
</dbReference>
<proteinExistence type="inferred from homology"/>
<keyword id="KW-1185">Reference proteome</keyword>
<keyword id="KW-0687">Ribonucleoprotein</keyword>
<keyword id="KW-0689">Ribosomal protein</keyword>
<keyword id="KW-0694">RNA-binding</keyword>
<keyword id="KW-0699">rRNA-binding</keyword>
<evidence type="ECO:0000255" key="1">
    <source>
        <dbReference type="HAMAP-Rule" id="MF_00362"/>
    </source>
</evidence>
<evidence type="ECO:0000305" key="2"/>